<sequence length="257" mass="28306">MAMFLDTEAKVSKLKKGRRKLWPLPGAPREKQTNVFKFPTDGNDSDEDTNTNSGSSSDGEDGLLTSSGSDSVFNSTDYFSTPEDSQNCTPSDVSDLSDSENLDFKPADVLHDSENSTSPKFITSLVSSDSENSGADSSEEEIEEFIKSKAKQSLQLDAKTEEITSEEDCCVQEDSYDSDGDDVEAFIRQRAEMAITKHKTKRTISTSDDEGPRKSRKKRASKRISSSDDSEDETPKTKMTGTPPLAGNSCYVWPWLN</sequence>
<protein>
    <recommendedName>
        <fullName>Uncharacterized gene 45 protein</fullName>
    </recommendedName>
</protein>
<gene>
    <name type="primary">45</name>
</gene>
<organism>
    <name type="scientific">Saimiriine herpesvirus 2 (strain 11)</name>
    <name type="common">SaHV-2</name>
    <name type="synonym">Herpesvirus saimiri</name>
    <dbReference type="NCBI Taxonomy" id="10383"/>
    <lineage>
        <taxon>Viruses</taxon>
        <taxon>Duplodnaviria</taxon>
        <taxon>Heunggongvirae</taxon>
        <taxon>Peploviricota</taxon>
        <taxon>Herviviricetes</taxon>
        <taxon>Herpesvirales</taxon>
        <taxon>Orthoherpesviridae</taxon>
        <taxon>Gammaherpesvirinae</taxon>
        <taxon>Rhadinovirus</taxon>
        <taxon>Rhadinovirus saimiriinegamma2</taxon>
        <taxon>Saimiriine herpesvirus 2</taxon>
    </lineage>
</organism>
<feature type="chain" id="PRO_0000116264" description="Uncharacterized gene 45 protein">
    <location>
        <begin position="1"/>
        <end position="257"/>
    </location>
</feature>
<feature type="region of interest" description="Disordered" evidence="1">
    <location>
        <begin position="1"/>
        <end position="178"/>
    </location>
</feature>
<feature type="region of interest" description="Disordered" evidence="1">
    <location>
        <begin position="194"/>
        <end position="248"/>
    </location>
</feature>
<feature type="compositionally biased region" description="Basic residues" evidence="1">
    <location>
        <begin position="12"/>
        <end position="21"/>
    </location>
</feature>
<feature type="compositionally biased region" description="Low complexity" evidence="1">
    <location>
        <begin position="50"/>
        <end position="71"/>
    </location>
</feature>
<feature type="compositionally biased region" description="Polar residues" evidence="1">
    <location>
        <begin position="72"/>
        <end position="94"/>
    </location>
</feature>
<feature type="compositionally biased region" description="Basic and acidic residues" evidence="1">
    <location>
        <begin position="102"/>
        <end position="114"/>
    </location>
</feature>
<feature type="compositionally biased region" description="Polar residues" evidence="1">
    <location>
        <begin position="115"/>
        <end position="126"/>
    </location>
</feature>
<feature type="compositionally biased region" description="Low complexity" evidence="1">
    <location>
        <begin position="127"/>
        <end position="136"/>
    </location>
</feature>
<feature type="compositionally biased region" description="Acidic residues" evidence="1">
    <location>
        <begin position="163"/>
        <end position="178"/>
    </location>
</feature>
<dbReference type="EMBL" id="X64346">
    <property type="protein sequence ID" value="CAA45668.1"/>
    <property type="molecule type" value="Genomic_DNA"/>
</dbReference>
<dbReference type="RefSeq" id="NP_040247.1">
    <property type="nucleotide sequence ID" value="NC_001350.1"/>
</dbReference>
<dbReference type="KEGG" id="vg:1682495"/>
<dbReference type="Proteomes" id="UP000000587">
    <property type="component" value="Segment"/>
</dbReference>
<organismHost>
    <name type="scientific">Saimiri sciureus</name>
    <name type="common">Common squirrel monkey</name>
    <dbReference type="NCBI Taxonomy" id="9521"/>
</organismHost>
<keyword id="KW-1185">Reference proteome</keyword>
<reference key="1">
    <citation type="journal article" date="1992" name="J. Virol.">
        <title>Primary structure of the herpesvirus saimiri genome.</title>
        <authorList>
            <person name="Albrecht J.-C."/>
            <person name="Nicholas J."/>
            <person name="Biller D."/>
            <person name="Cameron K.R."/>
            <person name="Biesinger B."/>
            <person name="Newman C."/>
            <person name="Wittmann S."/>
            <person name="Craxton M.A."/>
            <person name="Coleman H."/>
            <person name="Fleckenstein B."/>
            <person name="Honess R.W."/>
        </authorList>
    </citation>
    <scope>NUCLEOTIDE SEQUENCE [LARGE SCALE GENOMIC DNA]</scope>
</reference>
<proteinExistence type="inferred from homology"/>
<comment type="similarity">
    <text evidence="2">Belongs to the herpesviridae BKRF4 family.</text>
</comment>
<evidence type="ECO:0000256" key="1">
    <source>
        <dbReference type="SAM" id="MobiDB-lite"/>
    </source>
</evidence>
<evidence type="ECO:0000305" key="2"/>
<accession>Q01030</accession>
<name>VG45_SHV21</name>